<keyword id="KW-0068">Autocatalytic cleavage</keyword>
<keyword id="KW-0227">DNA damage</keyword>
<keyword id="KW-0234">DNA repair</keyword>
<keyword id="KW-0235">DNA replication</keyword>
<keyword id="KW-0238">DNA-binding</keyword>
<keyword id="KW-0378">Hydrolase</keyword>
<keyword id="KW-1185">Reference proteome</keyword>
<keyword id="KW-0678">Repressor</keyword>
<keyword id="KW-0742">SOS response</keyword>
<keyword id="KW-0804">Transcription</keyword>
<keyword id="KW-0805">Transcription regulation</keyword>
<comment type="function">
    <text evidence="1">Represses a number of genes involved in the response to DNA damage (SOS response), including recA and lexA. In the presence of single-stranded DNA, RecA interacts with LexA causing an autocatalytic cleavage which disrupts the DNA-binding part of LexA, leading to derepression of the SOS regulon and eventually DNA repair.</text>
</comment>
<comment type="catalytic activity">
    <reaction evidence="1">
        <text>Hydrolysis of Ala-|-Gly bond in repressor LexA.</text>
        <dbReference type="EC" id="3.4.21.88"/>
    </reaction>
</comment>
<comment type="subunit">
    <text evidence="1">Homodimer.</text>
</comment>
<comment type="similarity">
    <text evidence="1">Belongs to the peptidase S24 family.</text>
</comment>
<name>LEXA_GLAP5</name>
<gene>
    <name evidence="1" type="primary">lexA</name>
    <name type="ordered locus">HAPS_0014</name>
</gene>
<reference key="1">
    <citation type="journal article" date="2009" name="J. Bacteriol.">
        <title>Complete genome sequence of Haemophilus parasuis SH0165.</title>
        <authorList>
            <person name="Yue M."/>
            <person name="Yang F."/>
            <person name="Yang J."/>
            <person name="Bei W."/>
            <person name="Cai X."/>
            <person name="Chen L."/>
            <person name="Dong J."/>
            <person name="Zhou R."/>
            <person name="Jin M."/>
            <person name="Jin Q."/>
            <person name="Chen H."/>
        </authorList>
    </citation>
    <scope>NUCLEOTIDE SEQUENCE [LARGE SCALE GENOMIC DNA]</scope>
    <source>
        <strain>SH0165</strain>
    </source>
</reference>
<evidence type="ECO:0000255" key="1">
    <source>
        <dbReference type="HAMAP-Rule" id="MF_00015"/>
    </source>
</evidence>
<feature type="chain" id="PRO_1000116607" description="LexA repressor">
    <location>
        <begin position="1"/>
        <end position="209"/>
    </location>
</feature>
<feature type="DNA-binding region" description="H-T-H motif" evidence="1">
    <location>
        <begin position="30"/>
        <end position="50"/>
    </location>
</feature>
<feature type="active site" description="For autocatalytic cleavage activity" evidence="1">
    <location>
        <position position="126"/>
    </location>
</feature>
<feature type="active site" description="For autocatalytic cleavage activity" evidence="1">
    <location>
        <position position="163"/>
    </location>
</feature>
<feature type="site" description="Cleavage; by autolysis" evidence="1">
    <location>
        <begin position="91"/>
        <end position="92"/>
    </location>
</feature>
<organism>
    <name type="scientific">Glaesserella parasuis serovar 5 (strain SH0165)</name>
    <name type="common">Haemophilus parasuis</name>
    <dbReference type="NCBI Taxonomy" id="557723"/>
    <lineage>
        <taxon>Bacteria</taxon>
        <taxon>Pseudomonadati</taxon>
        <taxon>Pseudomonadota</taxon>
        <taxon>Gammaproteobacteria</taxon>
        <taxon>Pasteurellales</taxon>
        <taxon>Pasteurellaceae</taxon>
        <taxon>Glaesserella</taxon>
    </lineage>
</organism>
<accession>B8F317</accession>
<sequence>MKRQHLTARQQEIFEFVKNHIESTGMPPTRVEIAREIGFKSPNAAEEHLKALARKGYIEMLSGTSRGIRILVEDEAANDEEGLPLIGKVAAGTPIEAIEHIEKHYPVNGAMFSPAADYLLKVNGNSMEKIGILDGDLLAVHKTKSVRNGQVVVARVDDEVTVKRLEKKGDLIYLHPENDELEPIVVDPRQSYIEIEGIAVGVIRSNAWM</sequence>
<proteinExistence type="inferred from homology"/>
<protein>
    <recommendedName>
        <fullName evidence="1">LexA repressor</fullName>
        <ecNumber evidence="1">3.4.21.88</ecNumber>
    </recommendedName>
</protein>
<dbReference type="EC" id="3.4.21.88" evidence="1"/>
<dbReference type="EMBL" id="CP001321">
    <property type="protein sequence ID" value="ACL31719.1"/>
    <property type="molecule type" value="Genomic_DNA"/>
</dbReference>
<dbReference type="RefSeq" id="WP_012621497.1">
    <property type="nucleotide sequence ID" value="NC_011852.1"/>
</dbReference>
<dbReference type="SMR" id="B8F317"/>
<dbReference type="STRING" id="557723.HAPS_0014"/>
<dbReference type="MEROPS" id="S24.001"/>
<dbReference type="GeneID" id="66618402"/>
<dbReference type="KEGG" id="hap:HAPS_0014"/>
<dbReference type="HOGENOM" id="CLU_066192_45_3_6"/>
<dbReference type="Proteomes" id="UP000006743">
    <property type="component" value="Chromosome"/>
</dbReference>
<dbReference type="GO" id="GO:0003677">
    <property type="term" value="F:DNA binding"/>
    <property type="evidence" value="ECO:0007669"/>
    <property type="project" value="UniProtKB-UniRule"/>
</dbReference>
<dbReference type="GO" id="GO:0004252">
    <property type="term" value="F:serine-type endopeptidase activity"/>
    <property type="evidence" value="ECO:0007669"/>
    <property type="project" value="UniProtKB-UniRule"/>
</dbReference>
<dbReference type="GO" id="GO:0006281">
    <property type="term" value="P:DNA repair"/>
    <property type="evidence" value="ECO:0007669"/>
    <property type="project" value="UniProtKB-UniRule"/>
</dbReference>
<dbReference type="GO" id="GO:0006260">
    <property type="term" value="P:DNA replication"/>
    <property type="evidence" value="ECO:0007669"/>
    <property type="project" value="UniProtKB-UniRule"/>
</dbReference>
<dbReference type="GO" id="GO:0045892">
    <property type="term" value="P:negative regulation of DNA-templated transcription"/>
    <property type="evidence" value="ECO:0007669"/>
    <property type="project" value="UniProtKB-UniRule"/>
</dbReference>
<dbReference type="GO" id="GO:0006508">
    <property type="term" value="P:proteolysis"/>
    <property type="evidence" value="ECO:0007669"/>
    <property type="project" value="InterPro"/>
</dbReference>
<dbReference type="GO" id="GO:0009432">
    <property type="term" value="P:SOS response"/>
    <property type="evidence" value="ECO:0007669"/>
    <property type="project" value="UniProtKB-UniRule"/>
</dbReference>
<dbReference type="CDD" id="cd06529">
    <property type="entry name" value="S24_LexA-like"/>
    <property type="match status" value="1"/>
</dbReference>
<dbReference type="FunFam" id="1.10.10.10:FF:000009">
    <property type="entry name" value="LexA repressor"/>
    <property type="match status" value="1"/>
</dbReference>
<dbReference type="FunFam" id="2.10.109.10:FF:000001">
    <property type="entry name" value="LexA repressor"/>
    <property type="match status" value="1"/>
</dbReference>
<dbReference type="Gene3D" id="2.10.109.10">
    <property type="entry name" value="Umud Fragment, subunit A"/>
    <property type="match status" value="1"/>
</dbReference>
<dbReference type="Gene3D" id="1.10.10.10">
    <property type="entry name" value="Winged helix-like DNA-binding domain superfamily/Winged helix DNA-binding domain"/>
    <property type="match status" value="1"/>
</dbReference>
<dbReference type="HAMAP" id="MF_00015">
    <property type="entry name" value="LexA"/>
    <property type="match status" value="1"/>
</dbReference>
<dbReference type="InterPro" id="IPR006200">
    <property type="entry name" value="LexA"/>
</dbReference>
<dbReference type="InterPro" id="IPR039418">
    <property type="entry name" value="LexA-like"/>
</dbReference>
<dbReference type="InterPro" id="IPR036286">
    <property type="entry name" value="LexA/Signal_pep-like_sf"/>
</dbReference>
<dbReference type="InterPro" id="IPR006199">
    <property type="entry name" value="LexA_DNA-bd_dom"/>
</dbReference>
<dbReference type="InterPro" id="IPR050077">
    <property type="entry name" value="LexA_repressor"/>
</dbReference>
<dbReference type="InterPro" id="IPR006197">
    <property type="entry name" value="Peptidase_S24_LexA"/>
</dbReference>
<dbReference type="InterPro" id="IPR015927">
    <property type="entry name" value="Peptidase_S24_S26A/B/C"/>
</dbReference>
<dbReference type="InterPro" id="IPR036388">
    <property type="entry name" value="WH-like_DNA-bd_sf"/>
</dbReference>
<dbReference type="InterPro" id="IPR036390">
    <property type="entry name" value="WH_DNA-bd_sf"/>
</dbReference>
<dbReference type="NCBIfam" id="TIGR00498">
    <property type="entry name" value="lexA"/>
    <property type="match status" value="1"/>
</dbReference>
<dbReference type="PANTHER" id="PTHR33516">
    <property type="entry name" value="LEXA REPRESSOR"/>
    <property type="match status" value="1"/>
</dbReference>
<dbReference type="PANTHER" id="PTHR33516:SF2">
    <property type="entry name" value="LEXA REPRESSOR-RELATED"/>
    <property type="match status" value="1"/>
</dbReference>
<dbReference type="Pfam" id="PF01726">
    <property type="entry name" value="LexA_DNA_bind"/>
    <property type="match status" value="1"/>
</dbReference>
<dbReference type="Pfam" id="PF00717">
    <property type="entry name" value="Peptidase_S24"/>
    <property type="match status" value="1"/>
</dbReference>
<dbReference type="PRINTS" id="PR00726">
    <property type="entry name" value="LEXASERPTASE"/>
</dbReference>
<dbReference type="SUPFAM" id="SSF51306">
    <property type="entry name" value="LexA/Signal peptidase"/>
    <property type="match status" value="1"/>
</dbReference>
<dbReference type="SUPFAM" id="SSF46785">
    <property type="entry name" value="Winged helix' DNA-binding domain"/>
    <property type="match status" value="1"/>
</dbReference>